<evidence type="ECO:0000255" key="1">
    <source>
        <dbReference type="HAMAP-Rule" id="MF_00268"/>
    </source>
</evidence>
<gene>
    <name evidence="1" type="primary">recA</name>
    <name type="ordered locus">GSU0145</name>
</gene>
<comment type="function">
    <text evidence="1">Can catalyze the hydrolysis of ATP in the presence of single-stranded DNA, the ATP-dependent uptake of single-stranded DNA by duplex DNA, and the ATP-dependent hybridization of homologous single-stranded DNAs. It interacts with LexA causing its activation and leading to its autocatalytic cleavage.</text>
</comment>
<comment type="subcellular location">
    <subcellularLocation>
        <location evidence="1">Cytoplasm</location>
    </subcellularLocation>
</comment>
<comment type="similarity">
    <text evidence="1">Belongs to the RecA family.</text>
</comment>
<feature type="chain" id="PRO_0000122718" description="Protein RecA">
    <location>
        <begin position="1"/>
        <end position="338"/>
    </location>
</feature>
<feature type="binding site" evidence="1">
    <location>
        <begin position="66"/>
        <end position="73"/>
    </location>
    <ligand>
        <name>ATP</name>
        <dbReference type="ChEBI" id="CHEBI:30616"/>
    </ligand>
</feature>
<dbReference type="EMBL" id="AE017180">
    <property type="protein sequence ID" value="AAR33480.1"/>
    <property type="molecule type" value="Genomic_DNA"/>
</dbReference>
<dbReference type="RefSeq" id="NP_951207.1">
    <property type="nucleotide sequence ID" value="NC_002939.5"/>
</dbReference>
<dbReference type="RefSeq" id="WP_010940821.1">
    <property type="nucleotide sequence ID" value="NC_002939.5"/>
</dbReference>
<dbReference type="SMR" id="P62215"/>
<dbReference type="FunCoup" id="P62215">
    <property type="interactions" value="529"/>
</dbReference>
<dbReference type="STRING" id="243231.GSU0145"/>
<dbReference type="EnsemblBacteria" id="AAR33480">
    <property type="protein sequence ID" value="AAR33480"/>
    <property type="gene ID" value="GSU0145"/>
</dbReference>
<dbReference type="KEGG" id="gsu:GSU0145"/>
<dbReference type="PATRIC" id="fig|243231.5.peg.146"/>
<dbReference type="eggNOG" id="COG0468">
    <property type="taxonomic scope" value="Bacteria"/>
</dbReference>
<dbReference type="HOGENOM" id="CLU_040469_1_2_7"/>
<dbReference type="InParanoid" id="P62215"/>
<dbReference type="OrthoDB" id="9776733at2"/>
<dbReference type="Proteomes" id="UP000000577">
    <property type="component" value="Chromosome"/>
</dbReference>
<dbReference type="GO" id="GO:0005737">
    <property type="term" value="C:cytoplasm"/>
    <property type="evidence" value="ECO:0007669"/>
    <property type="project" value="UniProtKB-SubCell"/>
</dbReference>
<dbReference type="GO" id="GO:0005524">
    <property type="term" value="F:ATP binding"/>
    <property type="evidence" value="ECO:0007669"/>
    <property type="project" value="UniProtKB-UniRule"/>
</dbReference>
<dbReference type="GO" id="GO:0016887">
    <property type="term" value="F:ATP hydrolysis activity"/>
    <property type="evidence" value="ECO:0007669"/>
    <property type="project" value="InterPro"/>
</dbReference>
<dbReference type="GO" id="GO:0140664">
    <property type="term" value="F:ATP-dependent DNA damage sensor activity"/>
    <property type="evidence" value="ECO:0007669"/>
    <property type="project" value="InterPro"/>
</dbReference>
<dbReference type="GO" id="GO:0003684">
    <property type="term" value="F:damaged DNA binding"/>
    <property type="evidence" value="ECO:0007669"/>
    <property type="project" value="UniProtKB-UniRule"/>
</dbReference>
<dbReference type="GO" id="GO:0003697">
    <property type="term" value="F:single-stranded DNA binding"/>
    <property type="evidence" value="ECO:0007669"/>
    <property type="project" value="UniProtKB-UniRule"/>
</dbReference>
<dbReference type="GO" id="GO:0006310">
    <property type="term" value="P:DNA recombination"/>
    <property type="evidence" value="ECO:0007669"/>
    <property type="project" value="UniProtKB-UniRule"/>
</dbReference>
<dbReference type="GO" id="GO:0006281">
    <property type="term" value="P:DNA repair"/>
    <property type="evidence" value="ECO:0007669"/>
    <property type="project" value="UniProtKB-UniRule"/>
</dbReference>
<dbReference type="GO" id="GO:0009432">
    <property type="term" value="P:SOS response"/>
    <property type="evidence" value="ECO:0007669"/>
    <property type="project" value="UniProtKB-UniRule"/>
</dbReference>
<dbReference type="CDD" id="cd00983">
    <property type="entry name" value="RecA"/>
    <property type="match status" value="1"/>
</dbReference>
<dbReference type="FunFam" id="3.40.50.300:FF:000087">
    <property type="entry name" value="Recombinase RecA"/>
    <property type="match status" value="1"/>
</dbReference>
<dbReference type="Gene3D" id="3.40.50.300">
    <property type="entry name" value="P-loop containing nucleotide triphosphate hydrolases"/>
    <property type="match status" value="1"/>
</dbReference>
<dbReference type="HAMAP" id="MF_00268">
    <property type="entry name" value="RecA"/>
    <property type="match status" value="1"/>
</dbReference>
<dbReference type="InterPro" id="IPR003593">
    <property type="entry name" value="AAA+_ATPase"/>
</dbReference>
<dbReference type="InterPro" id="IPR013765">
    <property type="entry name" value="DNA_recomb/repair_RecA"/>
</dbReference>
<dbReference type="InterPro" id="IPR020584">
    <property type="entry name" value="DNA_recomb/repair_RecA_CS"/>
</dbReference>
<dbReference type="InterPro" id="IPR027417">
    <property type="entry name" value="P-loop_NTPase"/>
</dbReference>
<dbReference type="InterPro" id="IPR049261">
    <property type="entry name" value="RecA-like_C"/>
</dbReference>
<dbReference type="InterPro" id="IPR049428">
    <property type="entry name" value="RecA-like_N"/>
</dbReference>
<dbReference type="InterPro" id="IPR020588">
    <property type="entry name" value="RecA_ATP-bd"/>
</dbReference>
<dbReference type="InterPro" id="IPR023400">
    <property type="entry name" value="RecA_C_sf"/>
</dbReference>
<dbReference type="InterPro" id="IPR020587">
    <property type="entry name" value="RecA_monomer-monomer_interface"/>
</dbReference>
<dbReference type="NCBIfam" id="TIGR02012">
    <property type="entry name" value="tigrfam_recA"/>
    <property type="match status" value="1"/>
</dbReference>
<dbReference type="PANTHER" id="PTHR45900:SF1">
    <property type="entry name" value="MITOCHONDRIAL DNA REPAIR PROTEIN RECA HOMOLOG-RELATED"/>
    <property type="match status" value="1"/>
</dbReference>
<dbReference type="PANTHER" id="PTHR45900">
    <property type="entry name" value="RECA"/>
    <property type="match status" value="1"/>
</dbReference>
<dbReference type="Pfam" id="PF00154">
    <property type="entry name" value="RecA"/>
    <property type="match status" value="1"/>
</dbReference>
<dbReference type="Pfam" id="PF21096">
    <property type="entry name" value="RecA_C"/>
    <property type="match status" value="1"/>
</dbReference>
<dbReference type="PRINTS" id="PR00142">
    <property type="entry name" value="RECA"/>
</dbReference>
<dbReference type="SMART" id="SM00382">
    <property type="entry name" value="AAA"/>
    <property type="match status" value="1"/>
</dbReference>
<dbReference type="SUPFAM" id="SSF52540">
    <property type="entry name" value="P-loop containing nucleoside triphosphate hydrolases"/>
    <property type="match status" value="1"/>
</dbReference>
<dbReference type="SUPFAM" id="SSF54752">
    <property type="entry name" value="RecA protein, C-terminal domain"/>
    <property type="match status" value="1"/>
</dbReference>
<dbReference type="PROSITE" id="PS00321">
    <property type="entry name" value="RECA_1"/>
    <property type="match status" value="1"/>
</dbReference>
<dbReference type="PROSITE" id="PS50162">
    <property type="entry name" value="RECA_2"/>
    <property type="match status" value="1"/>
</dbReference>
<dbReference type="PROSITE" id="PS50163">
    <property type="entry name" value="RECA_3"/>
    <property type="match status" value="1"/>
</dbReference>
<sequence length="338" mass="36239">MTQEREKAIELALSQIEKQFGKGAIMRLGADEALPDVAAIPTGSLSLDLALGVGGVPRGRIIEIYGPESSGKTTLALHIAAEAQKMGGIAAFVDAEHALDIGYARKLGVKTDDLLVSQPDTGEQALEIAEMLVRSGAVDVLVIDSVAALVPKAEIEGEMGDSHMGLQARLMSQALRKLTGIISKSNCCVIFINQIRMKIGVMFGNPETTTGGNALKFYASVRLDIRKIASLKQGQDVIGSRTKVKVVKNKVAPPFKEVEFDIYYGEGISREGDILDLAVEKGIVDKSGAWFSYGGDRIGQGRENSRLFLKERPELVNEIEGKVYDVAGIPRKGAKEAA</sequence>
<reference key="1">
    <citation type="journal article" date="2003" name="Science">
        <title>Genome of Geobacter sulfurreducens: metal reduction in subsurface environments.</title>
        <authorList>
            <person name="Methe B.A."/>
            <person name="Nelson K.E."/>
            <person name="Eisen J.A."/>
            <person name="Paulsen I.T."/>
            <person name="Nelson W.C."/>
            <person name="Heidelberg J.F."/>
            <person name="Wu D."/>
            <person name="Wu M."/>
            <person name="Ward N.L."/>
            <person name="Beanan M.J."/>
            <person name="Dodson R.J."/>
            <person name="Madupu R."/>
            <person name="Brinkac L.M."/>
            <person name="Daugherty S.C."/>
            <person name="DeBoy R.T."/>
            <person name="Durkin A.S."/>
            <person name="Gwinn M.L."/>
            <person name="Kolonay J.F."/>
            <person name="Sullivan S.A."/>
            <person name="Haft D.H."/>
            <person name="Selengut J."/>
            <person name="Davidsen T.M."/>
            <person name="Zafar N."/>
            <person name="White O."/>
            <person name="Tran B."/>
            <person name="Romero C."/>
            <person name="Forberger H.A."/>
            <person name="Weidman J.F."/>
            <person name="Khouri H.M."/>
            <person name="Feldblyum T.V."/>
            <person name="Utterback T.R."/>
            <person name="Van Aken S.E."/>
            <person name="Lovley D.R."/>
            <person name="Fraser C.M."/>
        </authorList>
    </citation>
    <scope>NUCLEOTIDE SEQUENCE [LARGE SCALE GENOMIC DNA]</scope>
    <source>
        <strain>ATCC 51573 / DSM 12127 / PCA</strain>
    </source>
</reference>
<accession>P62215</accession>
<proteinExistence type="inferred from homology"/>
<keyword id="KW-0067">ATP-binding</keyword>
<keyword id="KW-0963">Cytoplasm</keyword>
<keyword id="KW-0227">DNA damage</keyword>
<keyword id="KW-0233">DNA recombination</keyword>
<keyword id="KW-0234">DNA repair</keyword>
<keyword id="KW-0238">DNA-binding</keyword>
<keyword id="KW-0547">Nucleotide-binding</keyword>
<keyword id="KW-1185">Reference proteome</keyword>
<keyword id="KW-0742">SOS response</keyword>
<name>RECA_GEOSL</name>
<protein>
    <recommendedName>
        <fullName evidence="1">Protein RecA</fullName>
    </recommendedName>
    <alternativeName>
        <fullName evidence="1">Recombinase A</fullName>
    </alternativeName>
</protein>
<organism>
    <name type="scientific">Geobacter sulfurreducens (strain ATCC 51573 / DSM 12127 / PCA)</name>
    <dbReference type="NCBI Taxonomy" id="243231"/>
    <lineage>
        <taxon>Bacteria</taxon>
        <taxon>Pseudomonadati</taxon>
        <taxon>Thermodesulfobacteriota</taxon>
        <taxon>Desulfuromonadia</taxon>
        <taxon>Geobacterales</taxon>
        <taxon>Geobacteraceae</taxon>
        <taxon>Geobacter</taxon>
    </lineage>
</organism>